<name>CYSD_RHOPB</name>
<gene>
    <name evidence="1" type="primary">cysD</name>
    <name type="ordered locus">RPC_0063</name>
</gene>
<evidence type="ECO:0000255" key="1">
    <source>
        <dbReference type="HAMAP-Rule" id="MF_00064"/>
    </source>
</evidence>
<evidence type="ECO:0000256" key="2">
    <source>
        <dbReference type="SAM" id="MobiDB-lite"/>
    </source>
</evidence>
<organism>
    <name type="scientific">Rhodopseudomonas palustris (strain BisB18)</name>
    <dbReference type="NCBI Taxonomy" id="316056"/>
    <lineage>
        <taxon>Bacteria</taxon>
        <taxon>Pseudomonadati</taxon>
        <taxon>Pseudomonadota</taxon>
        <taxon>Alphaproteobacteria</taxon>
        <taxon>Hyphomicrobiales</taxon>
        <taxon>Nitrobacteraceae</taxon>
        <taxon>Rhodopseudomonas</taxon>
    </lineage>
</organism>
<feature type="chain" id="PRO_0000340217" description="Sulfate adenylyltransferase subunit 2">
    <location>
        <begin position="1"/>
        <end position="328"/>
    </location>
</feature>
<feature type="region of interest" description="Disordered" evidence="2">
    <location>
        <begin position="305"/>
        <end position="328"/>
    </location>
</feature>
<protein>
    <recommendedName>
        <fullName evidence="1">Sulfate adenylyltransferase subunit 2</fullName>
        <ecNumber evidence="1">2.7.7.4</ecNumber>
    </recommendedName>
    <alternativeName>
        <fullName evidence="1">ATP-sulfurylase small subunit</fullName>
    </alternativeName>
    <alternativeName>
        <fullName evidence="1">Sulfate adenylate transferase</fullName>
        <shortName evidence="1">SAT</shortName>
    </alternativeName>
</protein>
<comment type="function">
    <text evidence="1">With CysN forms the ATP sulfurylase (ATPS) that catalyzes the adenylation of sulfate producing adenosine 5'-phosphosulfate (APS) and diphosphate, the first enzymatic step in sulfur assimilation pathway. APS synthesis involves the formation of a high-energy phosphoric-sulfuric acid anhydride bond driven by GTP hydrolysis by CysN coupled to ATP hydrolysis by CysD.</text>
</comment>
<comment type="catalytic activity">
    <reaction evidence="1">
        <text>sulfate + ATP + H(+) = adenosine 5'-phosphosulfate + diphosphate</text>
        <dbReference type="Rhea" id="RHEA:18133"/>
        <dbReference type="ChEBI" id="CHEBI:15378"/>
        <dbReference type="ChEBI" id="CHEBI:16189"/>
        <dbReference type="ChEBI" id="CHEBI:30616"/>
        <dbReference type="ChEBI" id="CHEBI:33019"/>
        <dbReference type="ChEBI" id="CHEBI:58243"/>
        <dbReference type="EC" id="2.7.7.4"/>
    </reaction>
</comment>
<comment type="pathway">
    <text evidence="1">Sulfur metabolism; hydrogen sulfide biosynthesis; sulfite from sulfate: step 1/3.</text>
</comment>
<comment type="subunit">
    <text evidence="1">Heterodimer composed of CysD, the smaller subunit, and CysN.</text>
</comment>
<comment type="similarity">
    <text evidence="1">Belongs to the PAPS reductase family. CysD subfamily.</text>
</comment>
<sequence length="328" mass="36958">MTDILDELDAGRAPLAPTLADLRGDWARAEPSAHLQRLESESIHILREVAAEFAKPVMLYSIGKDSSVLLHLAMKAFAPGKPPFPLLHVDTTWKFREMIEFRDQRMRELGLDLIVHINPDGVAQGIGPFSHGSALHTDVMKTQGLRQALEAHGFDAAIGGARRDEEKSRAKERIFSHRSAAHRWDPKNQRPELWSLYNTLLAPGESMRVFPLSNWTERDVWDYILVEQIPIVPLYFAALRPVVERDGALIMVDDARMPLRPGEVPQLRSVRFRTLGCYPLTGAMPSTATTLEQIVDEMLASRSSERQGRVIDRDSTGSMERKKAEGYF</sequence>
<keyword id="KW-0067">ATP-binding</keyword>
<keyword id="KW-0547">Nucleotide-binding</keyword>
<keyword id="KW-0548">Nucleotidyltransferase</keyword>
<keyword id="KW-0808">Transferase</keyword>
<dbReference type="EC" id="2.7.7.4" evidence="1"/>
<dbReference type="EMBL" id="CP000301">
    <property type="protein sequence ID" value="ABD85642.1"/>
    <property type="molecule type" value="Genomic_DNA"/>
</dbReference>
<dbReference type="SMR" id="Q21D94"/>
<dbReference type="STRING" id="316056.RPC_0063"/>
<dbReference type="KEGG" id="rpc:RPC_0063"/>
<dbReference type="eggNOG" id="COG0175">
    <property type="taxonomic scope" value="Bacteria"/>
</dbReference>
<dbReference type="HOGENOM" id="CLU_043026_0_0_5"/>
<dbReference type="OrthoDB" id="9772604at2"/>
<dbReference type="UniPathway" id="UPA00140">
    <property type="reaction ID" value="UER00204"/>
</dbReference>
<dbReference type="GO" id="GO:0005524">
    <property type="term" value="F:ATP binding"/>
    <property type="evidence" value="ECO:0007669"/>
    <property type="project" value="UniProtKB-KW"/>
</dbReference>
<dbReference type="GO" id="GO:0004781">
    <property type="term" value="F:sulfate adenylyltransferase (ATP) activity"/>
    <property type="evidence" value="ECO:0007669"/>
    <property type="project" value="UniProtKB-UniRule"/>
</dbReference>
<dbReference type="GO" id="GO:0070814">
    <property type="term" value="P:hydrogen sulfide biosynthetic process"/>
    <property type="evidence" value="ECO:0007669"/>
    <property type="project" value="UniProtKB-UniRule"/>
</dbReference>
<dbReference type="GO" id="GO:0000103">
    <property type="term" value="P:sulfate assimilation"/>
    <property type="evidence" value="ECO:0007669"/>
    <property type="project" value="UniProtKB-UniRule"/>
</dbReference>
<dbReference type="CDD" id="cd23946">
    <property type="entry name" value="Sulfate_adenylyltransferase_2"/>
    <property type="match status" value="1"/>
</dbReference>
<dbReference type="FunFam" id="3.40.50.620:FF:000002">
    <property type="entry name" value="Sulfate adenylyltransferase subunit 2"/>
    <property type="match status" value="1"/>
</dbReference>
<dbReference type="Gene3D" id="3.40.50.620">
    <property type="entry name" value="HUPs"/>
    <property type="match status" value="1"/>
</dbReference>
<dbReference type="HAMAP" id="MF_00064">
    <property type="entry name" value="Sulf_adenylyltr_sub2"/>
    <property type="match status" value="1"/>
</dbReference>
<dbReference type="InterPro" id="IPR002500">
    <property type="entry name" value="PAPS_reduct_dom"/>
</dbReference>
<dbReference type="InterPro" id="IPR014729">
    <property type="entry name" value="Rossmann-like_a/b/a_fold"/>
</dbReference>
<dbReference type="InterPro" id="IPR011784">
    <property type="entry name" value="SO4_adenylTrfase_ssu"/>
</dbReference>
<dbReference type="InterPro" id="IPR050128">
    <property type="entry name" value="Sulfate_adenylyltrnsfr_sub2"/>
</dbReference>
<dbReference type="NCBIfam" id="TIGR02039">
    <property type="entry name" value="CysD"/>
    <property type="match status" value="1"/>
</dbReference>
<dbReference type="NCBIfam" id="NF003587">
    <property type="entry name" value="PRK05253.1"/>
    <property type="match status" value="1"/>
</dbReference>
<dbReference type="NCBIfam" id="NF009214">
    <property type="entry name" value="PRK12563.1"/>
    <property type="match status" value="1"/>
</dbReference>
<dbReference type="PANTHER" id="PTHR43196">
    <property type="entry name" value="SULFATE ADENYLYLTRANSFERASE SUBUNIT 2"/>
    <property type="match status" value="1"/>
</dbReference>
<dbReference type="PANTHER" id="PTHR43196:SF1">
    <property type="entry name" value="SULFATE ADENYLYLTRANSFERASE SUBUNIT 2"/>
    <property type="match status" value="1"/>
</dbReference>
<dbReference type="Pfam" id="PF01507">
    <property type="entry name" value="PAPS_reduct"/>
    <property type="match status" value="1"/>
</dbReference>
<dbReference type="PIRSF" id="PIRSF002936">
    <property type="entry name" value="CysDAde_trans"/>
    <property type="match status" value="1"/>
</dbReference>
<dbReference type="SUPFAM" id="SSF52402">
    <property type="entry name" value="Adenine nucleotide alpha hydrolases-like"/>
    <property type="match status" value="1"/>
</dbReference>
<accession>Q21D94</accession>
<reference key="1">
    <citation type="submission" date="2006-03" db="EMBL/GenBank/DDBJ databases">
        <title>Complete sequence of Rhodopseudomonas palustris BisB18.</title>
        <authorList>
            <consortium name="US DOE Joint Genome Institute"/>
            <person name="Copeland A."/>
            <person name="Lucas S."/>
            <person name="Lapidus A."/>
            <person name="Barry K."/>
            <person name="Detter J.C."/>
            <person name="Glavina del Rio T."/>
            <person name="Hammon N."/>
            <person name="Israni S."/>
            <person name="Dalin E."/>
            <person name="Tice H."/>
            <person name="Pitluck S."/>
            <person name="Chain P."/>
            <person name="Malfatti S."/>
            <person name="Shin M."/>
            <person name="Vergez L."/>
            <person name="Schmutz J."/>
            <person name="Larimer F."/>
            <person name="Land M."/>
            <person name="Hauser L."/>
            <person name="Pelletier D.A."/>
            <person name="Kyrpides N."/>
            <person name="Anderson I."/>
            <person name="Oda Y."/>
            <person name="Harwood C.S."/>
            <person name="Richardson P."/>
        </authorList>
    </citation>
    <scope>NUCLEOTIDE SEQUENCE [LARGE SCALE GENOMIC DNA]</scope>
    <source>
        <strain>BisB18</strain>
    </source>
</reference>
<proteinExistence type="inferred from homology"/>